<sequence>MAVQKSRVTPSRRGQRRSHDALSAKQLSTDPTTGEVHLRHHITADGFYRGKKVIQTKTSAVEED</sequence>
<comment type="similarity">
    <text evidence="1">Belongs to the bacterial ribosomal protein bL32 family.</text>
</comment>
<evidence type="ECO:0000255" key="1">
    <source>
        <dbReference type="HAMAP-Rule" id="MF_00340"/>
    </source>
</evidence>
<evidence type="ECO:0000256" key="2">
    <source>
        <dbReference type="SAM" id="MobiDB-lite"/>
    </source>
</evidence>
<evidence type="ECO:0000305" key="3"/>
<accession>B2FR85</accession>
<gene>
    <name evidence="1" type="primary">rpmF</name>
    <name type="ordered locus">Smlt1025</name>
</gene>
<proteinExistence type="inferred from homology"/>
<keyword id="KW-1185">Reference proteome</keyword>
<keyword id="KW-0687">Ribonucleoprotein</keyword>
<keyword id="KW-0689">Ribosomal protein</keyword>
<protein>
    <recommendedName>
        <fullName evidence="1">Large ribosomal subunit protein bL32</fullName>
    </recommendedName>
    <alternativeName>
        <fullName evidence="3">50S ribosomal protein L32</fullName>
    </alternativeName>
</protein>
<feature type="chain" id="PRO_1000120177" description="Large ribosomal subunit protein bL32">
    <location>
        <begin position="1"/>
        <end position="64"/>
    </location>
</feature>
<feature type="region of interest" description="Disordered" evidence="2">
    <location>
        <begin position="1"/>
        <end position="36"/>
    </location>
</feature>
<organism>
    <name type="scientific">Stenotrophomonas maltophilia (strain K279a)</name>
    <dbReference type="NCBI Taxonomy" id="522373"/>
    <lineage>
        <taxon>Bacteria</taxon>
        <taxon>Pseudomonadati</taxon>
        <taxon>Pseudomonadota</taxon>
        <taxon>Gammaproteobacteria</taxon>
        <taxon>Lysobacterales</taxon>
        <taxon>Lysobacteraceae</taxon>
        <taxon>Stenotrophomonas</taxon>
        <taxon>Stenotrophomonas maltophilia group</taxon>
    </lineage>
</organism>
<reference key="1">
    <citation type="journal article" date="2008" name="Genome Biol.">
        <title>The complete genome, comparative and functional analysis of Stenotrophomonas maltophilia reveals an organism heavily shielded by drug resistance determinants.</title>
        <authorList>
            <person name="Crossman L.C."/>
            <person name="Gould V.C."/>
            <person name="Dow J.M."/>
            <person name="Vernikos G.S."/>
            <person name="Okazaki A."/>
            <person name="Sebaihia M."/>
            <person name="Saunders D."/>
            <person name="Arrowsmith C."/>
            <person name="Carver T."/>
            <person name="Peters N."/>
            <person name="Adlem E."/>
            <person name="Kerhornou A."/>
            <person name="Lord A."/>
            <person name="Murphy L."/>
            <person name="Seeger K."/>
            <person name="Squares R."/>
            <person name="Rutter S."/>
            <person name="Quail M.A."/>
            <person name="Rajandream M.A."/>
            <person name="Harris D."/>
            <person name="Churcher C."/>
            <person name="Bentley S.D."/>
            <person name="Parkhill J."/>
            <person name="Thomson N.R."/>
            <person name="Avison M.B."/>
        </authorList>
    </citation>
    <scope>NUCLEOTIDE SEQUENCE [LARGE SCALE GENOMIC DNA]</scope>
    <source>
        <strain>K279a</strain>
    </source>
</reference>
<name>RL32_STRMK</name>
<dbReference type="EMBL" id="AM743169">
    <property type="protein sequence ID" value="CAQ44587.1"/>
    <property type="molecule type" value="Genomic_DNA"/>
</dbReference>
<dbReference type="RefSeq" id="WP_005408308.1">
    <property type="nucleotide sequence ID" value="NC_010943.1"/>
</dbReference>
<dbReference type="SMR" id="B2FR85"/>
<dbReference type="EnsemblBacteria" id="CAQ44587">
    <property type="protein sequence ID" value="CAQ44587"/>
    <property type="gene ID" value="Smlt1025"/>
</dbReference>
<dbReference type="GeneID" id="97260056"/>
<dbReference type="KEGG" id="sml:Smlt1025"/>
<dbReference type="eggNOG" id="COG0333">
    <property type="taxonomic scope" value="Bacteria"/>
</dbReference>
<dbReference type="HOGENOM" id="CLU_129084_2_1_6"/>
<dbReference type="Proteomes" id="UP000008840">
    <property type="component" value="Chromosome"/>
</dbReference>
<dbReference type="GO" id="GO:0015934">
    <property type="term" value="C:large ribosomal subunit"/>
    <property type="evidence" value="ECO:0007669"/>
    <property type="project" value="InterPro"/>
</dbReference>
<dbReference type="GO" id="GO:0003735">
    <property type="term" value="F:structural constituent of ribosome"/>
    <property type="evidence" value="ECO:0007669"/>
    <property type="project" value="InterPro"/>
</dbReference>
<dbReference type="GO" id="GO:0006412">
    <property type="term" value="P:translation"/>
    <property type="evidence" value="ECO:0007669"/>
    <property type="project" value="UniProtKB-UniRule"/>
</dbReference>
<dbReference type="HAMAP" id="MF_00340">
    <property type="entry name" value="Ribosomal_bL32"/>
    <property type="match status" value="1"/>
</dbReference>
<dbReference type="InterPro" id="IPR002677">
    <property type="entry name" value="Ribosomal_bL32"/>
</dbReference>
<dbReference type="InterPro" id="IPR044957">
    <property type="entry name" value="Ribosomal_bL32_bact"/>
</dbReference>
<dbReference type="InterPro" id="IPR011332">
    <property type="entry name" value="Ribosomal_zn-bd"/>
</dbReference>
<dbReference type="NCBIfam" id="TIGR01031">
    <property type="entry name" value="rpmF_bact"/>
    <property type="match status" value="1"/>
</dbReference>
<dbReference type="PANTHER" id="PTHR35534">
    <property type="entry name" value="50S RIBOSOMAL PROTEIN L32"/>
    <property type="match status" value="1"/>
</dbReference>
<dbReference type="PANTHER" id="PTHR35534:SF1">
    <property type="entry name" value="LARGE RIBOSOMAL SUBUNIT PROTEIN BL32"/>
    <property type="match status" value="1"/>
</dbReference>
<dbReference type="Pfam" id="PF01783">
    <property type="entry name" value="Ribosomal_L32p"/>
    <property type="match status" value="1"/>
</dbReference>
<dbReference type="SUPFAM" id="SSF57829">
    <property type="entry name" value="Zn-binding ribosomal proteins"/>
    <property type="match status" value="1"/>
</dbReference>